<dbReference type="EMBL" id="CP000449">
    <property type="protein sequence ID" value="ABI67302.1"/>
    <property type="molecule type" value="Genomic_DNA"/>
</dbReference>
<dbReference type="SMR" id="Q0AK91"/>
<dbReference type="STRING" id="394221.Mmar10_3021"/>
<dbReference type="KEGG" id="mmr:Mmar10_3021"/>
<dbReference type="eggNOG" id="COG0249">
    <property type="taxonomic scope" value="Bacteria"/>
</dbReference>
<dbReference type="HOGENOM" id="CLU_002472_4_0_5"/>
<dbReference type="OrthoDB" id="9802448at2"/>
<dbReference type="Proteomes" id="UP000001964">
    <property type="component" value="Chromosome"/>
</dbReference>
<dbReference type="GO" id="GO:0005829">
    <property type="term" value="C:cytosol"/>
    <property type="evidence" value="ECO:0007669"/>
    <property type="project" value="TreeGrafter"/>
</dbReference>
<dbReference type="GO" id="GO:0005524">
    <property type="term" value="F:ATP binding"/>
    <property type="evidence" value="ECO:0007669"/>
    <property type="project" value="UniProtKB-UniRule"/>
</dbReference>
<dbReference type="GO" id="GO:0140664">
    <property type="term" value="F:ATP-dependent DNA damage sensor activity"/>
    <property type="evidence" value="ECO:0007669"/>
    <property type="project" value="InterPro"/>
</dbReference>
<dbReference type="GO" id="GO:0003684">
    <property type="term" value="F:damaged DNA binding"/>
    <property type="evidence" value="ECO:0007669"/>
    <property type="project" value="UniProtKB-UniRule"/>
</dbReference>
<dbReference type="GO" id="GO:0030983">
    <property type="term" value="F:mismatched DNA binding"/>
    <property type="evidence" value="ECO:0007669"/>
    <property type="project" value="InterPro"/>
</dbReference>
<dbReference type="GO" id="GO:0006298">
    <property type="term" value="P:mismatch repair"/>
    <property type="evidence" value="ECO:0007669"/>
    <property type="project" value="UniProtKB-UniRule"/>
</dbReference>
<dbReference type="CDD" id="cd03284">
    <property type="entry name" value="ABC_MutS1"/>
    <property type="match status" value="1"/>
</dbReference>
<dbReference type="FunFam" id="3.40.1170.10:FF:000001">
    <property type="entry name" value="DNA mismatch repair protein MutS"/>
    <property type="match status" value="1"/>
</dbReference>
<dbReference type="Gene3D" id="1.10.1420.10">
    <property type="match status" value="2"/>
</dbReference>
<dbReference type="Gene3D" id="6.10.140.430">
    <property type="match status" value="1"/>
</dbReference>
<dbReference type="Gene3D" id="3.40.1170.10">
    <property type="entry name" value="DNA repair protein MutS, domain I"/>
    <property type="match status" value="1"/>
</dbReference>
<dbReference type="Gene3D" id="3.30.420.110">
    <property type="entry name" value="MutS, connector domain"/>
    <property type="match status" value="1"/>
</dbReference>
<dbReference type="Gene3D" id="3.40.50.300">
    <property type="entry name" value="P-loop containing nucleotide triphosphate hydrolases"/>
    <property type="match status" value="1"/>
</dbReference>
<dbReference type="HAMAP" id="MF_00096">
    <property type="entry name" value="MutS"/>
    <property type="match status" value="1"/>
</dbReference>
<dbReference type="InterPro" id="IPR005748">
    <property type="entry name" value="DNA_mismatch_repair_MutS"/>
</dbReference>
<dbReference type="InterPro" id="IPR007695">
    <property type="entry name" value="DNA_mismatch_repair_MutS-lik_N"/>
</dbReference>
<dbReference type="InterPro" id="IPR017261">
    <property type="entry name" value="DNA_mismatch_repair_MutS/MSH"/>
</dbReference>
<dbReference type="InterPro" id="IPR000432">
    <property type="entry name" value="DNA_mismatch_repair_MutS_C"/>
</dbReference>
<dbReference type="InterPro" id="IPR007861">
    <property type="entry name" value="DNA_mismatch_repair_MutS_clamp"/>
</dbReference>
<dbReference type="InterPro" id="IPR007696">
    <property type="entry name" value="DNA_mismatch_repair_MutS_core"/>
</dbReference>
<dbReference type="InterPro" id="IPR016151">
    <property type="entry name" value="DNA_mismatch_repair_MutS_N"/>
</dbReference>
<dbReference type="InterPro" id="IPR036187">
    <property type="entry name" value="DNA_mismatch_repair_MutS_sf"/>
</dbReference>
<dbReference type="InterPro" id="IPR007860">
    <property type="entry name" value="DNA_mmatch_repair_MutS_con_dom"/>
</dbReference>
<dbReference type="InterPro" id="IPR045076">
    <property type="entry name" value="MutS"/>
</dbReference>
<dbReference type="InterPro" id="IPR036678">
    <property type="entry name" value="MutS_con_dom_sf"/>
</dbReference>
<dbReference type="InterPro" id="IPR027417">
    <property type="entry name" value="P-loop_NTPase"/>
</dbReference>
<dbReference type="NCBIfam" id="TIGR01070">
    <property type="entry name" value="mutS1"/>
    <property type="match status" value="1"/>
</dbReference>
<dbReference type="NCBIfam" id="NF003810">
    <property type="entry name" value="PRK05399.1"/>
    <property type="match status" value="1"/>
</dbReference>
<dbReference type="PANTHER" id="PTHR11361:SF34">
    <property type="entry name" value="DNA MISMATCH REPAIR PROTEIN MSH1, MITOCHONDRIAL"/>
    <property type="match status" value="1"/>
</dbReference>
<dbReference type="PANTHER" id="PTHR11361">
    <property type="entry name" value="DNA MISMATCH REPAIR PROTEIN MUTS FAMILY MEMBER"/>
    <property type="match status" value="1"/>
</dbReference>
<dbReference type="Pfam" id="PF01624">
    <property type="entry name" value="MutS_I"/>
    <property type="match status" value="1"/>
</dbReference>
<dbReference type="Pfam" id="PF05188">
    <property type="entry name" value="MutS_II"/>
    <property type="match status" value="1"/>
</dbReference>
<dbReference type="Pfam" id="PF05192">
    <property type="entry name" value="MutS_III"/>
    <property type="match status" value="1"/>
</dbReference>
<dbReference type="Pfam" id="PF05190">
    <property type="entry name" value="MutS_IV"/>
    <property type="match status" value="1"/>
</dbReference>
<dbReference type="Pfam" id="PF00488">
    <property type="entry name" value="MutS_V"/>
    <property type="match status" value="1"/>
</dbReference>
<dbReference type="PIRSF" id="PIRSF037677">
    <property type="entry name" value="DNA_mis_repair_Msh6"/>
    <property type="match status" value="1"/>
</dbReference>
<dbReference type="SMART" id="SM00534">
    <property type="entry name" value="MUTSac"/>
    <property type="match status" value="1"/>
</dbReference>
<dbReference type="SMART" id="SM00533">
    <property type="entry name" value="MUTSd"/>
    <property type="match status" value="1"/>
</dbReference>
<dbReference type="SUPFAM" id="SSF55271">
    <property type="entry name" value="DNA repair protein MutS, domain I"/>
    <property type="match status" value="1"/>
</dbReference>
<dbReference type="SUPFAM" id="SSF53150">
    <property type="entry name" value="DNA repair protein MutS, domain II"/>
    <property type="match status" value="1"/>
</dbReference>
<dbReference type="SUPFAM" id="SSF48334">
    <property type="entry name" value="DNA repair protein MutS, domain III"/>
    <property type="match status" value="1"/>
</dbReference>
<dbReference type="SUPFAM" id="SSF52540">
    <property type="entry name" value="P-loop containing nucleoside triphosphate hydrolases"/>
    <property type="match status" value="1"/>
</dbReference>
<dbReference type="PROSITE" id="PS00486">
    <property type="entry name" value="DNA_MISMATCH_REPAIR_2"/>
    <property type="match status" value="1"/>
</dbReference>
<keyword id="KW-0067">ATP-binding</keyword>
<keyword id="KW-0227">DNA damage</keyword>
<keyword id="KW-0234">DNA repair</keyword>
<keyword id="KW-0238">DNA-binding</keyword>
<keyword id="KW-0547">Nucleotide-binding</keyword>
<keyword id="KW-1185">Reference proteome</keyword>
<sequence>MNAMSTLPVPRDRTFPSSEGATPMMQQFLELRAQAPADALLFYRMGDFYELFFDDAVRASAALDIALTKRGEHQGEPISMCGVPAATAEAYLARLIKAGFKVAVGEQMEDPKTAKARGGSKAVVRRAITRVVTPGTLTEDSLLDPRVSNRIAALAQLVTGEAALAWADVSTGDFRVSPVATENLAAEIAAMSPAELLVEERGFAEAAMLAPRSTLTPLPKAKFDPSSAERQLKDQFRVQELTAFGNFTKAECAALGALLDYLSLSQAGAPAKLAPPRQVAAGACLAIDPATRASLEIERTLSGSRQGSLLDAIDRTVTAPGARKLAERLARPLTNVAEIEARLDAIAWFERARPERRDLRDRLRQAGDAERALSRLLLGRGGPRDLKSLAAALQEGEIIASRLLDRTLDTPPTLISEGLEALVLGDKPELAELIAELERAIVDEPPLLARDGGFIAEGWQVELDELRQLRDASRRVVAGLQQTYAEAVGVSALKIKHNNVLGYFVEVTAKHGDALMGDDRFIHRQTMANAIRFSTTELAELEAKIASAGDRALAMEIDAFAGLRDRVEAQADLIRGAARALAEFDVAASLAEWAEDSEAARPVMSQDSVFHIEGGRHPVVERALAKAGDGRFTPNDCHLDGAGEEAKRLTFVTGPNMAGKSTFLRQNALILMLAQAGCYVPARAARIGVADRLYSRVGAADDLARGRSTFMAEMIETAAILNQATARSFVILDEIGRGTATFDGLSIAWAAAEHLHAVNGCRALFATHYHELTRLADDLDAAGNVSLKAREWKGELVFLHEVGSGAADRSYGIEVARRAGLPRVSVKRAQAILARLEADGAPAAALTDLPLFALSEPEPEPVISEVETRLGEIDPDALSPREALEVLYALKAMTKKT</sequence>
<gene>
    <name evidence="1" type="primary">mutS</name>
    <name type="ordered locus">Mmar10_3021</name>
</gene>
<organism>
    <name type="scientific">Maricaulis maris (strain MCS10)</name>
    <name type="common">Caulobacter maris</name>
    <dbReference type="NCBI Taxonomy" id="394221"/>
    <lineage>
        <taxon>Bacteria</taxon>
        <taxon>Pseudomonadati</taxon>
        <taxon>Pseudomonadota</taxon>
        <taxon>Alphaproteobacteria</taxon>
        <taxon>Maricaulales</taxon>
        <taxon>Maricaulaceae</taxon>
        <taxon>Maricaulis</taxon>
    </lineage>
</organism>
<protein>
    <recommendedName>
        <fullName evidence="1">DNA mismatch repair protein MutS</fullName>
    </recommendedName>
</protein>
<proteinExistence type="inferred from homology"/>
<reference key="1">
    <citation type="submission" date="2006-08" db="EMBL/GenBank/DDBJ databases">
        <title>Complete sequence of Maricaulis maris MCS10.</title>
        <authorList>
            <consortium name="US DOE Joint Genome Institute"/>
            <person name="Copeland A."/>
            <person name="Lucas S."/>
            <person name="Lapidus A."/>
            <person name="Barry K."/>
            <person name="Detter J.C."/>
            <person name="Glavina del Rio T."/>
            <person name="Hammon N."/>
            <person name="Israni S."/>
            <person name="Dalin E."/>
            <person name="Tice H."/>
            <person name="Pitluck S."/>
            <person name="Saunders E."/>
            <person name="Brettin T."/>
            <person name="Bruce D."/>
            <person name="Han C."/>
            <person name="Tapia R."/>
            <person name="Gilna P."/>
            <person name="Schmutz J."/>
            <person name="Larimer F."/>
            <person name="Land M."/>
            <person name="Hauser L."/>
            <person name="Kyrpides N."/>
            <person name="Mikhailova N."/>
            <person name="Viollier P."/>
            <person name="Stephens C."/>
            <person name="Richardson P."/>
        </authorList>
    </citation>
    <scope>NUCLEOTIDE SEQUENCE [LARGE SCALE GENOMIC DNA]</scope>
    <source>
        <strain>MCS10</strain>
    </source>
</reference>
<evidence type="ECO:0000255" key="1">
    <source>
        <dbReference type="HAMAP-Rule" id="MF_00096"/>
    </source>
</evidence>
<accession>Q0AK91</accession>
<feature type="chain" id="PRO_0000335177" description="DNA mismatch repair protein MutS">
    <location>
        <begin position="1"/>
        <end position="897"/>
    </location>
</feature>
<feature type="binding site" evidence="1">
    <location>
        <begin position="654"/>
        <end position="661"/>
    </location>
    <ligand>
        <name>ATP</name>
        <dbReference type="ChEBI" id="CHEBI:30616"/>
    </ligand>
</feature>
<comment type="function">
    <text evidence="1">This protein is involved in the repair of mismatches in DNA. It is possible that it carries out the mismatch recognition step. This protein has a weak ATPase activity.</text>
</comment>
<comment type="similarity">
    <text evidence="1">Belongs to the DNA mismatch repair MutS family.</text>
</comment>
<name>MUTS_MARMM</name>